<reference key="1">
    <citation type="journal article" date="2000" name="DNA Res.">
        <title>Structural analysis of Arabidopsis thaliana chromosome 3. II. Sequence features of the 4,251,695 bp regions covered by 90 P1, TAC and BAC clones.</title>
        <authorList>
            <person name="Kaneko T."/>
            <person name="Katoh T."/>
            <person name="Sato S."/>
            <person name="Nakamura Y."/>
            <person name="Asamizu E."/>
            <person name="Tabata S."/>
        </authorList>
    </citation>
    <scope>NUCLEOTIDE SEQUENCE [LARGE SCALE GENOMIC DNA]</scope>
    <source>
        <strain>cv. Columbia</strain>
    </source>
</reference>
<reference key="2">
    <citation type="journal article" date="2017" name="Plant J.">
        <title>Araport11: a complete reannotation of the Arabidopsis thaliana reference genome.</title>
        <authorList>
            <person name="Cheng C.Y."/>
            <person name="Krishnakumar V."/>
            <person name="Chan A.P."/>
            <person name="Thibaud-Nissen F."/>
            <person name="Schobel S."/>
            <person name="Town C.D."/>
        </authorList>
    </citation>
    <scope>GENOME REANNOTATION</scope>
    <source>
        <strain>cv. Columbia</strain>
    </source>
</reference>
<reference key="3">
    <citation type="submission" date="2004-10" db="EMBL/GenBank/DDBJ databases">
        <title>Arabidopsis cDNA clones.</title>
        <authorList>
            <person name="Shinn P."/>
            <person name="Chen H."/>
            <person name="Cheuk R."/>
            <person name="Kim C.J."/>
            <person name="Ecker J.R."/>
        </authorList>
    </citation>
    <scope>NUCLEOTIDE SEQUENCE [LARGE SCALE MRNA]</scope>
    <source>
        <strain>cv. Columbia</strain>
    </source>
</reference>
<reference key="4">
    <citation type="journal article" date="2000" name="Nature">
        <title>Sequence and analysis of chromosome 3 of the plant Arabidopsis thaliana.</title>
        <authorList>
            <person name="Salanoubat M."/>
            <person name="Lemcke K."/>
            <person name="Rieger M."/>
            <person name="Ansorge W."/>
            <person name="Unseld M."/>
            <person name="Fartmann B."/>
            <person name="Valle G."/>
            <person name="Bloecker H."/>
            <person name="Perez-Alonso M."/>
            <person name="Obermaier B."/>
            <person name="Delseny M."/>
            <person name="Boutry M."/>
            <person name="Grivell L.A."/>
            <person name="Mache R."/>
            <person name="Puigdomenech P."/>
            <person name="De Simone V."/>
            <person name="Choisne N."/>
            <person name="Artiguenave F."/>
            <person name="Robert C."/>
            <person name="Brottier P."/>
            <person name="Wincker P."/>
            <person name="Cattolico L."/>
            <person name="Weissenbach J."/>
            <person name="Saurin W."/>
            <person name="Quetier F."/>
            <person name="Schaefer M."/>
            <person name="Mueller-Auer S."/>
            <person name="Gabel C."/>
            <person name="Fuchs M."/>
            <person name="Benes V."/>
            <person name="Wurmbach E."/>
            <person name="Drzonek H."/>
            <person name="Erfle H."/>
            <person name="Jordan N."/>
            <person name="Bangert S."/>
            <person name="Wiedelmann R."/>
            <person name="Kranz H."/>
            <person name="Voss H."/>
            <person name="Holland R."/>
            <person name="Brandt P."/>
            <person name="Nyakatura G."/>
            <person name="Vezzi A."/>
            <person name="D'Angelo M."/>
            <person name="Pallavicini A."/>
            <person name="Toppo S."/>
            <person name="Simionati B."/>
            <person name="Conrad A."/>
            <person name="Hornischer K."/>
            <person name="Kauer G."/>
            <person name="Loehnert T.-H."/>
            <person name="Nordsiek G."/>
            <person name="Reichelt J."/>
            <person name="Scharfe M."/>
            <person name="Schoen O."/>
            <person name="Bargues M."/>
            <person name="Terol J."/>
            <person name="Climent J."/>
            <person name="Navarro P."/>
            <person name="Collado C."/>
            <person name="Perez-Perez A."/>
            <person name="Ottenwaelder B."/>
            <person name="Duchemin D."/>
            <person name="Cooke R."/>
            <person name="Laudie M."/>
            <person name="Berger-Llauro C."/>
            <person name="Purnelle B."/>
            <person name="Masuy D."/>
            <person name="de Haan M."/>
            <person name="Maarse A.C."/>
            <person name="Alcaraz J.-P."/>
            <person name="Cottet A."/>
            <person name="Casacuberta E."/>
            <person name="Monfort A."/>
            <person name="Argiriou A."/>
            <person name="Flores M."/>
            <person name="Liguori R."/>
            <person name="Vitale D."/>
            <person name="Mannhaupt G."/>
            <person name="Haase D."/>
            <person name="Schoof H."/>
            <person name="Rudd S."/>
            <person name="Zaccaria P."/>
            <person name="Mewes H.-W."/>
            <person name="Mayer K.F.X."/>
            <person name="Kaul S."/>
            <person name="Town C.D."/>
            <person name="Koo H.L."/>
            <person name="Tallon L.J."/>
            <person name="Jenkins J."/>
            <person name="Rooney T."/>
            <person name="Rizzo M."/>
            <person name="Walts A."/>
            <person name="Utterback T."/>
            <person name="Fujii C.Y."/>
            <person name="Shea T.P."/>
            <person name="Creasy T.H."/>
            <person name="Haas B."/>
            <person name="Maiti R."/>
            <person name="Wu D."/>
            <person name="Peterson J."/>
            <person name="Van Aken S."/>
            <person name="Pai G."/>
            <person name="Militscher J."/>
            <person name="Sellers P."/>
            <person name="Gill J.E."/>
            <person name="Feldblyum T.V."/>
            <person name="Preuss D."/>
            <person name="Lin X."/>
            <person name="Nierman W.C."/>
            <person name="Salzberg S.L."/>
            <person name="White O."/>
            <person name="Venter J.C."/>
            <person name="Fraser C.M."/>
            <person name="Kaneko T."/>
            <person name="Nakamura Y."/>
            <person name="Sato S."/>
            <person name="Kato T."/>
            <person name="Asamizu E."/>
            <person name="Sasamoto S."/>
            <person name="Kimura T."/>
            <person name="Idesawa K."/>
            <person name="Kawashima K."/>
            <person name="Kishida Y."/>
            <person name="Kiyokawa C."/>
            <person name="Kohara M."/>
            <person name="Matsumoto M."/>
            <person name="Matsuno A."/>
            <person name="Muraki A."/>
            <person name="Nakayama S."/>
            <person name="Nakazaki N."/>
            <person name="Shinpo S."/>
            <person name="Takeuchi C."/>
            <person name="Wada T."/>
            <person name="Watanabe A."/>
            <person name="Yamada M."/>
            <person name="Yasuda M."/>
            <person name="Tabata S."/>
        </authorList>
    </citation>
    <scope>NUCLEOTIDE SEQUENCE [LARGE SCALE GENOMIC DNA] OF 137-389</scope>
    <source>
        <strain>cv. Columbia</strain>
    </source>
</reference>
<reference key="5">
    <citation type="journal article" date="2005" name="BMC Evol. Biol.">
        <title>Genome-wide comparative analysis of the IQD gene families in Arabidopsis thaliana and Oryza sativa.</title>
        <authorList>
            <person name="Abel S."/>
            <person name="Savchenko T."/>
            <person name="Levy M."/>
        </authorList>
    </citation>
    <scope>INTERACTION WITH CALMODULIN</scope>
    <scope>GENE FAMILY</scope>
    <scope>NOMENCLATURE</scope>
    <source>
        <strain>cv. Columbia</strain>
    </source>
</reference>
<reference key="6">
    <citation type="journal article" date="2017" name="Plant Physiol.">
        <title>The IQD family of calmodulin-binding proteins links calcium signaling to microtubules, membrane subdomains, and the nucleus.</title>
        <authorList>
            <person name="Buerstenbinder K."/>
            <person name="Moeller B."/>
            <person name="Ploetner R."/>
            <person name="Stamm G."/>
            <person name="Hause G."/>
            <person name="Mitra D."/>
            <person name="Abel S."/>
        </authorList>
    </citation>
    <scope>SUBCELLULAR LOCATION</scope>
    <source>
        <strain>cv. Columbia</strain>
    </source>
</reference>
<reference key="7">
    <citation type="journal article" date="2017" name="Plant Signal. Behav.">
        <title>Functions of IQD proteins as hubs in cellular calcium and auxin signaling: A toolbox for shape formation and tissue-specification in plants?</title>
        <authorList>
            <person name="Buerstenbinder K."/>
            <person name="Mitra D."/>
            <person name="Quegwer J."/>
        </authorList>
    </citation>
    <scope>REVIEW</scope>
</reference>
<feature type="chain" id="PRO_0000453131" description="Protein IQ-domain 26">
    <location>
        <begin position="1"/>
        <end position="389"/>
    </location>
</feature>
<feature type="domain" description="IQ 1" evidence="2">
    <location>
        <begin position="106"/>
        <end position="134"/>
    </location>
</feature>
<feature type="domain" description="IQ 2" evidence="2">
    <location>
        <begin position="135"/>
        <end position="157"/>
    </location>
</feature>
<feature type="region of interest" description="Calmodulin-binding" evidence="5">
    <location>
        <begin position="137"/>
        <end position="151"/>
    </location>
</feature>
<feature type="region of interest" description="Disordered" evidence="3">
    <location>
        <begin position="347"/>
        <end position="374"/>
    </location>
</feature>
<accession>Q9LK76</accession>
<accession>O04307</accession>
<organism>
    <name type="scientific">Arabidopsis thaliana</name>
    <name type="common">Mouse-ear cress</name>
    <dbReference type="NCBI Taxonomy" id="3702"/>
    <lineage>
        <taxon>Eukaryota</taxon>
        <taxon>Viridiplantae</taxon>
        <taxon>Streptophyta</taxon>
        <taxon>Embryophyta</taxon>
        <taxon>Tracheophyta</taxon>
        <taxon>Spermatophyta</taxon>
        <taxon>Magnoliopsida</taxon>
        <taxon>eudicotyledons</taxon>
        <taxon>Gunneridae</taxon>
        <taxon>Pentapetalae</taxon>
        <taxon>rosids</taxon>
        <taxon>malvids</taxon>
        <taxon>Brassicales</taxon>
        <taxon>Brassicaceae</taxon>
        <taxon>Camelineae</taxon>
        <taxon>Arabidopsis</taxon>
    </lineage>
</organism>
<name>IQD26_ARATH</name>
<proteinExistence type="evidence at protein level"/>
<gene>
    <name evidence="5" type="primary">IQD26</name>
    <name evidence="7" type="ordered locus">At3g16490</name>
    <name evidence="9" type="ORF">MDC8.12</name>
    <name evidence="8" type="ORF">T02O04.1</name>
</gene>
<protein>
    <recommendedName>
        <fullName evidence="5">Protein IQ-domain 26</fullName>
        <shortName evidence="5">AtIQD26</shortName>
    </recommendedName>
</protein>
<sequence>MGRAARWFKGIFGMKKSKEKENCVSGDVGGEAGGSNIHRKVLQADSVWLRTYLAETDKEQNKHAIAVAAATAAAADAAVAAAQAAVAVVRLTSNGRSGGYSGNAMERWAAVKIQSVFKGYLARKALRALKGLVKLQALVRGYLVRKRAAETLHSMQALIRAQTSVRSQRINRNNMFHPRHSLERLDDSRSEIHSKRISISVEKQSNHNNNAYDETSPKIVEIDTYKTKSRSKRMNVAVSECGDDFIYQAKDFEWSFPGEKCKFPTAQNTPRFSSSMANNNYYYTPPSPAKSVCRDACFRPSYPGLMTPSYMANTQSFKAKVRSHSAPRQRPDRKRLSLDEIMAARSSVSGVRMVQPQPQPQTQTQQQKRSPCSYDHQFRQNETDFRFYN</sequence>
<dbReference type="EMBL" id="AP000373">
    <property type="protein sequence ID" value="BAB01148.1"/>
    <property type="molecule type" value="Genomic_DNA"/>
</dbReference>
<dbReference type="EMBL" id="CP002686">
    <property type="protein sequence ID" value="AEE75826.1"/>
    <property type="molecule type" value="Genomic_DNA"/>
</dbReference>
<dbReference type="EMBL" id="BT015939">
    <property type="protein sequence ID" value="AAV34769.1"/>
    <property type="molecule type" value="mRNA"/>
</dbReference>
<dbReference type="EMBL" id="BT020577">
    <property type="protein sequence ID" value="AAW78596.1"/>
    <property type="molecule type" value="mRNA"/>
</dbReference>
<dbReference type="EMBL" id="AC001645">
    <property type="protein sequence ID" value="AAB63628.1"/>
    <property type="molecule type" value="Genomic_DNA"/>
</dbReference>
<dbReference type="RefSeq" id="NP_188270.1">
    <property type="nucleotide sequence ID" value="NM_112520.4"/>
</dbReference>
<dbReference type="SMR" id="Q9LK76"/>
<dbReference type="FunCoup" id="Q9LK76">
    <property type="interactions" value="227"/>
</dbReference>
<dbReference type="STRING" id="3702.Q9LK76"/>
<dbReference type="PaxDb" id="3702-AT3G16490.1"/>
<dbReference type="ProteomicsDB" id="177643"/>
<dbReference type="EnsemblPlants" id="AT3G16490.1">
    <property type="protein sequence ID" value="AT3G16490.1"/>
    <property type="gene ID" value="AT3G16490"/>
</dbReference>
<dbReference type="GeneID" id="820897"/>
<dbReference type="Gramene" id="AT3G16490.1">
    <property type="protein sequence ID" value="AT3G16490.1"/>
    <property type="gene ID" value="AT3G16490"/>
</dbReference>
<dbReference type="KEGG" id="ath:AT3G16490"/>
<dbReference type="Araport" id="AT3G16490"/>
<dbReference type="TAIR" id="AT3G16490">
    <property type="gene designation" value="IQD26"/>
</dbReference>
<dbReference type="eggNOG" id="ENOG502QVYZ">
    <property type="taxonomic scope" value="Eukaryota"/>
</dbReference>
<dbReference type="HOGENOM" id="CLU_042730_3_0_1"/>
<dbReference type="InParanoid" id="Q9LK76"/>
<dbReference type="OMA" id="MRSEFHS"/>
<dbReference type="OrthoDB" id="1704267at2759"/>
<dbReference type="PhylomeDB" id="Q9LK76"/>
<dbReference type="PRO" id="PR:Q9LK76"/>
<dbReference type="Proteomes" id="UP000006548">
    <property type="component" value="Chromosome 3"/>
</dbReference>
<dbReference type="ExpressionAtlas" id="Q9LK76">
    <property type="expression patterns" value="baseline and differential"/>
</dbReference>
<dbReference type="GO" id="GO:0005737">
    <property type="term" value="C:cytoplasm"/>
    <property type="evidence" value="ECO:0007669"/>
    <property type="project" value="UniProtKB-KW"/>
</dbReference>
<dbReference type="GO" id="GO:0005856">
    <property type="term" value="C:cytoskeleton"/>
    <property type="evidence" value="ECO:0007669"/>
    <property type="project" value="UniProtKB-SubCell"/>
</dbReference>
<dbReference type="GO" id="GO:0005886">
    <property type="term" value="C:plasma membrane"/>
    <property type="evidence" value="ECO:0007669"/>
    <property type="project" value="UniProtKB-SubCell"/>
</dbReference>
<dbReference type="GO" id="GO:0005516">
    <property type="term" value="F:calmodulin binding"/>
    <property type="evidence" value="ECO:0007669"/>
    <property type="project" value="UniProtKB-KW"/>
</dbReference>
<dbReference type="CDD" id="cd23767">
    <property type="entry name" value="IQCD"/>
    <property type="match status" value="1"/>
</dbReference>
<dbReference type="Gene3D" id="1.20.5.190">
    <property type="match status" value="1"/>
</dbReference>
<dbReference type="InterPro" id="IPR025064">
    <property type="entry name" value="DUF4005"/>
</dbReference>
<dbReference type="InterPro" id="IPR000048">
    <property type="entry name" value="IQ_motif_EF-hand-BS"/>
</dbReference>
<dbReference type="InterPro" id="IPR027417">
    <property type="entry name" value="P-loop_NTPase"/>
</dbReference>
<dbReference type="PANTHER" id="PTHR32295">
    <property type="entry name" value="IQ-DOMAIN 5-RELATED"/>
    <property type="match status" value="1"/>
</dbReference>
<dbReference type="PANTHER" id="PTHR32295:SF287">
    <property type="entry name" value="PROTEIN IQ-DOMAIN 26"/>
    <property type="match status" value="1"/>
</dbReference>
<dbReference type="Pfam" id="PF13178">
    <property type="entry name" value="DUF4005"/>
    <property type="match status" value="1"/>
</dbReference>
<dbReference type="Pfam" id="PF00612">
    <property type="entry name" value="IQ"/>
    <property type="match status" value="2"/>
</dbReference>
<dbReference type="SMART" id="SM00015">
    <property type="entry name" value="IQ"/>
    <property type="match status" value="2"/>
</dbReference>
<dbReference type="SUPFAM" id="SSF52540">
    <property type="entry name" value="P-loop containing nucleoside triphosphate hydrolases"/>
    <property type="match status" value="1"/>
</dbReference>
<dbReference type="PROSITE" id="PS50096">
    <property type="entry name" value="IQ"/>
    <property type="match status" value="2"/>
</dbReference>
<evidence type="ECO:0000250" key="1">
    <source>
        <dbReference type="UniProtKB" id="Q9SF32"/>
    </source>
</evidence>
<evidence type="ECO:0000255" key="2">
    <source>
        <dbReference type="PROSITE-ProRule" id="PRU00116"/>
    </source>
</evidence>
<evidence type="ECO:0000256" key="3">
    <source>
        <dbReference type="SAM" id="MobiDB-lite"/>
    </source>
</evidence>
<evidence type="ECO:0000269" key="4">
    <source>
    </source>
</evidence>
<evidence type="ECO:0000303" key="5">
    <source>
    </source>
</evidence>
<evidence type="ECO:0000305" key="6"/>
<evidence type="ECO:0000312" key="7">
    <source>
        <dbReference type="Araport" id="AT3G16490"/>
    </source>
</evidence>
<evidence type="ECO:0000312" key="8">
    <source>
        <dbReference type="EMBL" id="AAB63628.1"/>
    </source>
</evidence>
<evidence type="ECO:0000312" key="9">
    <source>
        <dbReference type="EMBL" id="BAB01148.1"/>
    </source>
</evidence>
<keyword id="KW-0112">Calmodulin-binding</keyword>
<keyword id="KW-1003">Cell membrane</keyword>
<keyword id="KW-0963">Cytoplasm</keyword>
<keyword id="KW-0206">Cytoskeleton</keyword>
<keyword id="KW-0472">Membrane</keyword>
<keyword id="KW-1185">Reference proteome</keyword>
<keyword id="KW-0677">Repeat</keyword>
<comment type="function">
    <text evidence="1">May be involved in cooperative interactions with calmodulins or calmodulin-like proteins (By similarity). Recruits calmodulin proteins to microtubules, thus being a potential scaffold in cellular signaling and trafficking (By similarity). May associate with nucleic acids and regulate gene expression at the transcriptional or post-transcriptional level (By similarity).</text>
</comment>
<comment type="subunit">
    <text evidence="1">Binds to multiple calmodulin (CaM) in the presence of Ca(2+) and CaM-like proteins.</text>
</comment>
<comment type="subcellular location">
    <subcellularLocation>
        <location evidence="4">Cell membrane</location>
    </subcellularLocation>
    <subcellularLocation>
        <location evidence="4">Cytoplasm</location>
        <location evidence="4">Cytoskeleton</location>
    </subcellularLocation>
</comment>
<comment type="similarity">
    <text evidence="6">Belongs to the IQD family.</text>
</comment>